<comment type="function">
    <text evidence="1">This protein is located at the 30S-50S ribosomal subunit interface and may play a role in the structure and function of the aminoacyl-tRNA binding site.</text>
</comment>
<comment type="similarity">
    <text evidence="1">Belongs to the bacterial ribosomal protein bL19 family.</text>
</comment>
<gene>
    <name evidence="1" type="primary">rplS</name>
    <name type="ordered locus">SaurJH1_1325</name>
</gene>
<protein>
    <recommendedName>
        <fullName evidence="1">Large ribosomal subunit protein bL19</fullName>
    </recommendedName>
    <alternativeName>
        <fullName evidence="2">50S ribosomal protein L19</fullName>
    </alternativeName>
</protein>
<reference key="1">
    <citation type="submission" date="2007-06" db="EMBL/GenBank/DDBJ databases">
        <title>Complete sequence of chromosome of Staphylococcus aureus subsp. aureus JH1.</title>
        <authorList>
            <consortium name="US DOE Joint Genome Institute"/>
            <person name="Copeland A."/>
            <person name="Lucas S."/>
            <person name="Lapidus A."/>
            <person name="Barry K."/>
            <person name="Detter J.C."/>
            <person name="Glavina del Rio T."/>
            <person name="Hammon N."/>
            <person name="Israni S."/>
            <person name="Dalin E."/>
            <person name="Tice H."/>
            <person name="Pitluck S."/>
            <person name="Chain P."/>
            <person name="Malfatti S."/>
            <person name="Shin M."/>
            <person name="Vergez L."/>
            <person name="Schmutz J."/>
            <person name="Larimer F."/>
            <person name="Land M."/>
            <person name="Hauser L."/>
            <person name="Kyrpides N."/>
            <person name="Ivanova N."/>
            <person name="Tomasz A."/>
            <person name="Richardson P."/>
        </authorList>
    </citation>
    <scope>NUCLEOTIDE SEQUENCE [LARGE SCALE GENOMIC DNA]</scope>
    <source>
        <strain>JH1</strain>
    </source>
</reference>
<organism>
    <name type="scientific">Staphylococcus aureus (strain JH1)</name>
    <dbReference type="NCBI Taxonomy" id="359787"/>
    <lineage>
        <taxon>Bacteria</taxon>
        <taxon>Bacillati</taxon>
        <taxon>Bacillota</taxon>
        <taxon>Bacilli</taxon>
        <taxon>Bacillales</taxon>
        <taxon>Staphylococcaceae</taxon>
        <taxon>Staphylococcus</taxon>
    </lineage>
</organism>
<dbReference type="EMBL" id="CP000736">
    <property type="protein sequence ID" value="ABR52178.1"/>
    <property type="molecule type" value="Genomic_DNA"/>
</dbReference>
<dbReference type="SMR" id="A6U160"/>
<dbReference type="KEGG" id="sah:SaurJH1_1325"/>
<dbReference type="HOGENOM" id="CLU_103507_2_1_9"/>
<dbReference type="GO" id="GO:0022625">
    <property type="term" value="C:cytosolic large ribosomal subunit"/>
    <property type="evidence" value="ECO:0007669"/>
    <property type="project" value="TreeGrafter"/>
</dbReference>
<dbReference type="GO" id="GO:0003735">
    <property type="term" value="F:structural constituent of ribosome"/>
    <property type="evidence" value="ECO:0007669"/>
    <property type="project" value="InterPro"/>
</dbReference>
<dbReference type="GO" id="GO:0006412">
    <property type="term" value="P:translation"/>
    <property type="evidence" value="ECO:0007669"/>
    <property type="project" value="UniProtKB-UniRule"/>
</dbReference>
<dbReference type="FunFam" id="2.30.30.790:FF:000001">
    <property type="entry name" value="50S ribosomal protein L19"/>
    <property type="match status" value="1"/>
</dbReference>
<dbReference type="Gene3D" id="2.30.30.790">
    <property type="match status" value="1"/>
</dbReference>
<dbReference type="HAMAP" id="MF_00402">
    <property type="entry name" value="Ribosomal_bL19"/>
    <property type="match status" value="1"/>
</dbReference>
<dbReference type="InterPro" id="IPR001857">
    <property type="entry name" value="Ribosomal_bL19"/>
</dbReference>
<dbReference type="InterPro" id="IPR018257">
    <property type="entry name" value="Ribosomal_bL19_CS"/>
</dbReference>
<dbReference type="InterPro" id="IPR038657">
    <property type="entry name" value="Ribosomal_bL19_sf"/>
</dbReference>
<dbReference type="InterPro" id="IPR008991">
    <property type="entry name" value="Translation_prot_SH3-like_sf"/>
</dbReference>
<dbReference type="NCBIfam" id="TIGR01024">
    <property type="entry name" value="rplS_bact"/>
    <property type="match status" value="1"/>
</dbReference>
<dbReference type="PANTHER" id="PTHR15680:SF9">
    <property type="entry name" value="LARGE RIBOSOMAL SUBUNIT PROTEIN BL19M"/>
    <property type="match status" value="1"/>
</dbReference>
<dbReference type="PANTHER" id="PTHR15680">
    <property type="entry name" value="RIBOSOMAL PROTEIN L19"/>
    <property type="match status" value="1"/>
</dbReference>
<dbReference type="Pfam" id="PF01245">
    <property type="entry name" value="Ribosomal_L19"/>
    <property type="match status" value="1"/>
</dbReference>
<dbReference type="PIRSF" id="PIRSF002191">
    <property type="entry name" value="Ribosomal_L19"/>
    <property type="match status" value="1"/>
</dbReference>
<dbReference type="PRINTS" id="PR00061">
    <property type="entry name" value="RIBOSOMALL19"/>
</dbReference>
<dbReference type="SUPFAM" id="SSF50104">
    <property type="entry name" value="Translation proteins SH3-like domain"/>
    <property type="match status" value="1"/>
</dbReference>
<dbReference type="PROSITE" id="PS01015">
    <property type="entry name" value="RIBOSOMAL_L19"/>
    <property type="match status" value="1"/>
</dbReference>
<keyword id="KW-0687">Ribonucleoprotein</keyword>
<keyword id="KW-0689">Ribosomal protein</keyword>
<evidence type="ECO:0000255" key="1">
    <source>
        <dbReference type="HAMAP-Rule" id="MF_00402"/>
    </source>
</evidence>
<evidence type="ECO:0000305" key="2"/>
<sequence>MTNHKLIEAVTKSQLRTDLPSFRPGDTLRVHVRIIEGTRERIQVFEGIVIKRRGGGVSETFTVRKISSGVGVERTFPLHTPKIEKIEVKRRGKVRRAKLYYLRSLRGKAARIQEIR</sequence>
<proteinExistence type="inferred from homology"/>
<name>RL19_STAA2</name>
<accession>A6U160</accession>
<feature type="chain" id="PRO_1000080375" description="Large ribosomal subunit protein bL19">
    <location>
        <begin position="1"/>
        <end position="116"/>
    </location>
</feature>